<dbReference type="EMBL" id="CU329671">
    <property type="protein sequence ID" value="CAB88237.1"/>
    <property type="molecule type" value="Genomic_DNA"/>
</dbReference>
<dbReference type="RefSeq" id="NP_595880.1">
    <property type="nucleotide sequence ID" value="NM_001021786.2"/>
</dbReference>
<dbReference type="SMR" id="Q9P783"/>
<dbReference type="BioGRID" id="276247">
    <property type="interactions" value="3"/>
</dbReference>
<dbReference type="FunCoup" id="Q9P783">
    <property type="interactions" value="592"/>
</dbReference>
<dbReference type="STRING" id="284812.Q9P783"/>
<dbReference type="iPTMnet" id="Q9P783"/>
<dbReference type="PaxDb" id="4896-SPBC1711.07.1"/>
<dbReference type="EnsemblFungi" id="SPBC1711.07.1">
    <property type="protein sequence ID" value="SPBC1711.07.1:pep"/>
    <property type="gene ID" value="SPBC1711.07"/>
</dbReference>
<dbReference type="GeneID" id="2539693"/>
<dbReference type="KEGG" id="spo:2539693"/>
<dbReference type="PomBase" id="SPBC1711.07">
    <property type="gene designation" value="rrb1"/>
</dbReference>
<dbReference type="VEuPathDB" id="FungiDB:SPBC1711.07"/>
<dbReference type="eggNOG" id="KOG0302">
    <property type="taxonomic scope" value="Eukaryota"/>
</dbReference>
<dbReference type="HOGENOM" id="CLU_025272_1_1_1"/>
<dbReference type="InParanoid" id="Q9P783"/>
<dbReference type="OMA" id="RHWKPNA"/>
<dbReference type="PhylomeDB" id="Q9P783"/>
<dbReference type="PRO" id="PR:Q9P783"/>
<dbReference type="Proteomes" id="UP000002485">
    <property type="component" value="Chromosome II"/>
</dbReference>
<dbReference type="GO" id="GO:0005829">
    <property type="term" value="C:cytosol"/>
    <property type="evidence" value="ECO:0007005"/>
    <property type="project" value="PomBase"/>
</dbReference>
<dbReference type="GO" id="GO:0005730">
    <property type="term" value="C:nucleolus"/>
    <property type="evidence" value="ECO:0000318"/>
    <property type="project" value="GO_Central"/>
</dbReference>
<dbReference type="GO" id="GO:0005634">
    <property type="term" value="C:nucleus"/>
    <property type="evidence" value="ECO:0007005"/>
    <property type="project" value="PomBase"/>
</dbReference>
<dbReference type="GO" id="GO:0140597">
    <property type="term" value="F:protein carrier chaperone"/>
    <property type="evidence" value="ECO:0000266"/>
    <property type="project" value="PomBase"/>
</dbReference>
<dbReference type="GO" id="GO:0180023">
    <property type="term" value="P:cytosolic large ribosomal subunit assembly"/>
    <property type="evidence" value="ECO:0000266"/>
    <property type="project" value="PomBase"/>
</dbReference>
<dbReference type="GO" id="GO:0042254">
    <property type="term" value="P:ribosome biogenesis"/>
    <property type="evidence" value="ECO:0000318"/>
    <property type="project" value="GO_Central"/>
</dbReference>
<dbReference type="GO" id="GO:0006364">
    <property type="term" value="P:rRNA processing"/>
    <property type="evidence" value="ECO:0007669"/>
    <property type="project" value="UniProtKB-KW"/>
</dbReference>
<dbReference type="Gene3D" id="2.130.10.10">
    <property type="entry name" value="YVTN repeat-like/Quinoprotein amine dehydrogenase"/>
    <property type="match status" value="1"/>
</dbReference>
<dbReference type="InterPro" id="IPR051972">
    <property type="entry name" value="Glutamate-rich_WD_repeat"/>
</dbReference>
<dbReference type="InterPro" id="IPR022052">
    <property type="entry name" value="Histone-bd_RBBP4-like_N"/>
</dbReference>
<dbReference type="InterPro" id="IPR015943">
    <property type="entry name" value="WD40/YVTN_repeat-like_dom_sf"/>
</dbReference>
<dbReference type="InterPro" id="IPR036322">
    <property type="entry name" value="WD40_repeat_dom_sf"/>
</dbReference>
<dbReference type="InterPro" id="IPR001680">
    <property type="entry name" value="WD40_rpt"/>
</dbReference>
<dbReference type="PANTHER" id="PTHR45903">
    <property type="entry name" value="GLUTAMATE-RICH WD REPEAT-CONTAINING PROTEIN 1"/>
    <property type="match status" value="1"/>
</dbReference>
<dbReference type="PANTHER" id="PTHR45903:SF1">
    <property type="entry name" value="GLUTAMATE-RICH WD REPEAT-CONTAINING PROTEIN 1"/>
    <property type="match status" value="1"/>
</dbReference>
<dbReference type="Pfam" id="PF12265">
    <property type="entry name" value="CAF1C_H4-bd"/>
    <property type="match status" value="1"/>
</dbReference>
<dbReference type="Pfam" id="PF00400">
    <property type="entry name" value="WD40"/>
    <property type="match status" value="2"/>
</dbReference>
<dbReference type="SMART" id="SM00320">
    <property type="entry name" value="WD40"/>
    <property type="match status" value="5"/>
</dbReference>
<dbReference type="SUPFAM" id="SSF50978">
    <property type="entry name" value="WD40 repeat-like"/>
    <property type="match status" value="1"/>
</dbReference>
<dbReference type="PROSITE" id="PS00678">
    <property type="entry name" value="WD_REPEATS_1"/>
    <property type="match status" value="1"/>
</dbReference>
<dbReference type="PROSITE" id="PS50082">
    <property type="entry name" value="WD_REPEATS_2"/>
    <property type="match status" value="2"/>
</dbReference>
<dbReference type="PROSITE" id="PS50294">
    <property type="entry name" value="WD_REPEATS_REGION"/>
    <property type="match status" value="1"/>
</dbReference>
<comment type="function">
    <text evidence="1">Involved in regulation of L3 expression and stability and plays a role in early 60S ribosomal subunit assembly. May be required for proper assembly of pre-ribosomal particles during early ribosome biogenesis, presumably by targeting L3 onto the 35S precursor rRNA (By similarity).</text>
</comment>
<comment type="subunit">
    <text evidence="1">Associates with ribosomal protein L3.</text>
</comment>
<comment type="subcellular location">
    <subcellularLocation>
        <location evidence="3">Cytoplasm</location>
    </subcellularLocation>
    <subcellularLocation>
        <location evidence="3">Nucleus</location>
        <location evidence="3">Nucleolus</location>
    </subcellularLocation>
</comment>
<reference key="1">
    <citation type="journal article" date="2002" name="Nature">
        <title>The genome sequence of Schizosaccharomyces pombe.</title>
        <authorList>
            <person name="Wood V."/>
            <person name="Gwilliam R."/>
            <person name="Rajandream M.A."/>
            <person name="Lyne M.H."/>
            <person name="Lyne R."/>
            <person name="Stewart A."/>
            <person name="Sgouros J.G."/>
            <person name="Peat N."/>
            <person name="Hayles J."/>
            <person name="Baker S.G."/>
            <person name="Basham D."/>
            <person name="Bowman S."/>
            <person name="Brooks K."/>
            <person name="Brown D."/>
            <person name="Brown S."/>
            <person name="Chillingworth T."/>
            <person name="Churcher C.M."/>
            <person name="Collins M."/>
            <person name="Connor R."/>
            <person name="Cronin A."/>
            <person name="Davis P."/>
            <person name="Feltwell T."/>
            <person name="Fraser A."/>
            <person name="Gentles S."/>
            <person name="Goble A."/>
            <person name="Hamlin N."/>
            <person name="Harris D.E."/>
            <person name="Hidalgo J."/>
            <person name="Hodgson G."/>
            <person name="Holroyd S."/>
            <person name="Hornsby T."/>
            <person name="Howarth S."/>
            <person name="Huckle E.J."/>
            <person name="Hunt S."/>
            <person name="Jagels K."/>
            <person name="James K.D."/>
            <person name="Jones L."/>
            <person name="Jones M."/>
            <person name="Leather S."/>
            <person name="McDonald S."/>
            <person name="McLean J."/>
            <person name="Mooney P."/>
            <person name="Moule S."/>
            <person name="Mungall K.L."/>
            <person name="Murphy L.D."/>
            <person name="Niblett D."/>
            <person name="Odell C."/>
            <person name="Oliver K."/>
            <person name="O'Neil S."/>
            <person name="Pearson D."/>
            <person name="Quail M.A."/>
            <person name="Rabbinowitsch E."/>
            <person name="Rutherford K.M."/>
            <person name="Rutter S."/>
            <person name="Saunders D."/>
            <person name="Seeger K."/>
            <person name="Sharp S."/>
            <person name="Skelton J."/>
            <person name="Simmonds M.N."/>
            <person name="Squares R."/>
            <person name="Squares S."/>
            <person name="Stevens K."/>
            <person name="Taylor K."/>
            <person name="Taylor R.G."/>
            <person name="Tivey A."/>
            <person name="Walsh S.V."/>
            <person name="Warren T."/>
            <person name="Whitehead S."/>
            <person name="Woodward J.R."/>
            <person name="Volckaert G."/>
            <person name="Aert R."/>
            <person name="Robben J."/>
            <person name="Grymonprez B."/>
            <person name="Weltjens I."/>
            <person name="Vanstreels E."/>
            <person name="Rieger M."/>
            <person name="Schaefer M."/>
            <person name="Mueller-Auer S."/>
            <person name="Gabel C."/>
            <person name="Fuchs M."/>
            <person name="Duesterhoeft A."/>
            <person name="Fritzc C."/>
            <person name="Holzer E."/>
            <person name="Moestl D."/>
            <person name="Hilbert H."/>
            <person name="Borzym K."/>
            <person name="Langer I."/>
            <person name="Beck A."/>
            <person name="Lehrach H."/>
            <person name="Reinhardt R."/>
            <person name="Pohl T.M."/>
            <person name="Eger P."/>
            <person name="Zimmermann W."/>
            <person name="Wedler H."/>
            <person name="Wambutt R."/>
            <person name="Purnelle B."/>
            <person name="Goffeau A."/>
            <person name="Cadieu E."/>
            <person name="Dreano S."/>
            <person name="Gloux S."/>
            <person name="Lelaure V."/>
            <person name="Mottier S."/>
            <person name="Galibert F."/>
            <person name="Aves S.J."/>
            <person name="Xiang Z."/>
            <person name="Hunt C."/>
            <person name="Moore K."/>
            <person name="Hurst S.M."/>
            <person name="Lucas M."/>
            <person name="Rochet M."/>
            <person name="Gaillardin C."/>
            <person name="Tallada V.A."/>
            <person name="Garzon A."/>
            <person name="Thode G."/>
            <person name="Daga R.R."/>
            <person name="Cruzado L."/>
            <person name="Jimenez J."/>
            <person name="Sanchez M."/>
            <person name="del Rey F."/>
            <person name="Benito J."/>
            <person name="Dominguez A."/>
            <person name="Revuelta J.L."/>
            <person name="Moreno S."/>
            <person name="Armstrong J."/>
            <person name="Forsburg S.L."/>
            <person name="Cerutti L."/>
            <person name="Lowe T."/>
            <person name="McCombie W.R."/>
            <person name="Paulsen I."/>
            <person name="Potashkin J."/>
            <person name="Shpakovski G.V."/>
            <person name="Ussery D."/>
            <person name="Barrell B.G."/>
            <person name="Nurse P."/>
        </authorList>
    </citation>
    <scope>NUCLEOTIDE SEQUENCE [LARGE SCALE GENOMIC DNA]</scope>
    <source>
        <strain>972 / ATCC 24843</strain>
    </source>
</reference>
<reference key="2">
    <citation type="journal article" date="2006" name="Nat. Biotechnol.">
        <title>ORFeome cloning and global analysis of protein localization in the fission yeast Schizosaccharomyces pombe.</title>
        <authorList>
            <person name="Matsuyama A."/>
            <person name="Arai R."/>
            <person name="Yashiroda Y."/>
            <person name="Shirai A."/>
            <person name="Kamata A."/>
            <person name="Sekido S."/>
            <person name="Kobayashi Y."/>
            <person name="Hashimoto A."/>
            <person name="Hamamoto M."/>
            <person name="Hiraoka Y."/>
            <person name="Horinouchi S."/>
            <person name="Yoshida M."/>
        </authorList>
    </citation>
    <scope>SUBCELLULAR LOCATION [LARGE SCALE ANALYSIS]</scope>
</reference>
<reference key="3">
    <citation type="journal article" date="2008" name="J. Proteome Res.">
        <title>Phosphoproteome analysis of fission yeast.</title>
        <authorList>
            <person name="Wilson-Grady J.T."/>
            <person name="Villen J."/>
            <person name="Gygi S.P."/>
        </authorList>
    </citation>
    <scope>PHOSPHORYLATION [LARGE SCALE ANALYSIS] AT SER-163 AND SER-166</scope>
    <scope>IDENTIFICATION BY MASS SPECTROMETRY</scope>
</reference>
<evidence type="ECO:0000250" key="1"/>
<evidence type="ECO:0000256" key="2">
    <source>
        <dbReference type="SAM" id="MobiDB-lite"/>
    </source>
</evidence>
<evidence type="ECO:0000269" key="3">
    <source>
    </source>
</evidence>
<evidence type="ECO:0000269" key="4">
    <source>
    </source>
</evidence>
<keyword id="KW-0963">Cytoplasm</keyword>
<keyword id="KW-0539">Nucleus</keyword>
<keyword id="KW-0597">Phosphoprotein</keyword>
<keyword id="KW-1185">Reference proteome</keyword>
<keyword id="KW-0677">Repeat</keyword>
<keyword id="KW-0690">Ribosome biogenesis</keyword>
<keyword id="KW-0698">rRNA processing</keyword>
<keyword id="KW-0853">WD repeat</keyword>
<gene>
    <name type="primary">rrb1</name>
    <name type="ORF">SPBC1711.07</name>
</gene>
<proteinExistence type="evidence at protein level"/>
<name>RRB1_SCHPO</name>
<organism>
    <name type="scientific">Schizosaccharomyces pombe (strain 972 / ATCC 24843)</name>
    <name type="common">Fission yeast</name>
    <dbReference type="NCBI Taxonomy" id="284812"/>
    <lineage>
        <taxon>Eukaryota</taxon>
        <taxon>Fungi</taxon>
        <taxon>Dikarya</taxon>
        <taxon>Ascomycota</taxon>
        <taxon>Taphrinomycotina</taxon>
        <taxon>Schizosaccharomycetes</taxon>
        <taxon>Schizosaccharomycetales</taxon>
        <taxon>Schizosaccharomycetaceae</taxon>
        <taxon>Schizosaccharomyces</taxon>
    </lineage>
</organism>
<accession>Q9P783</accession>
<protein>
    <recommendedName>
        <fullName>Ribosome assembly protein rrb1</fullName>
    </recommendedName>
</protein>
<sequence>MSKRAAEETVEFNSKNGPGQRGTVADNVDTEMGEFEDAYEDEIESEEEYIEADGEKDNGMDEEEQNDAQPSKIPWLPGGKINADEKLVADPSVYEMLHNIQVKWPFLSFDILQDSLGEERRAWPHQMYLVGGSQALDSNDNELTVMKLSQLYKTQHDENDDASDNSDVEEDPILEHKSISTKGACNRVRSARRPANSSKESLLASFHETGKVHIWDIAPHLRSLDSPGVMVSRKENSPLYTVNRHKTEGYALDWSPFEYSLLSGDNANEIFLTKYSNGGWQTDSSPFLSHTAAVEDLQWSPSEKNVFSSCSCDGTFRIWDVRNKQKTSALTVNAHPGVDVNVLSWNTRVPNLLATGADNGVWSVWDLRSLKSSSSVATPVASFKWHRAPIYSIEWHPNEDSVIGVVGADNQISLWDLSVELDEEEQDSRAAEGLQDVPPQLMFIHMGQQEIKEMHWHRQIPGTIVSTAMTGINVFKTITF</sequence>
<feature type="chain" id="PRO_0000316544" description="Ribosome assembly protein rrb1">
    <location>
        <begin position="1"/>
        <end position="480"/>
    </location>
</feature>
<feature type="repeat" description="WD 1">
    <location>
        <begin position="183"/>
        <end position="225"/>
    </location>
</feature>
<feature type="repeat" description="WD 2">
    <location>
        <begin position="289"/>
        <end position="329"/>
    </location>
</feature>
<feature type="repeat" description="WD 3">
    <location>
        <begin position="334"/>
        <end position="375"/>
    </location>
</feature>
<feature type="repeat" description="WD 4">
    <location>
        <begin position="385"/>
        <end position="425"/>
    </location>
</feature>
<feature type="repeat" description="WD 5">
    <location>
        <begin position="446"/>
        <end position="480"/>
    </location>
</feature>
<feature type="region of interest" description="Disordered" evidence="2">
    <location>
        <begin position="1"/>
        <end position="78"/>
    </location>
</feature>
<feature type="region of interest" description="Disordered" evidence="2">
    <location>
        <begin position="155"/>
        <end position="176"/>
    </location>
</feature>
<feature type="compositionally biased region" description="Acidic residues" evidence="2">
    <location>
        <begin position="28"/>
        <end position="52"/>
    </location>
</feature>
<feature type="compositionally biased region" description="Acidic residues" evidence="2">
    <location>
        <begin position="158"/>
        <end position="172"/>
    </location>
</feature>
<feature type="modified residue" description="Phosphoserine" evidence="4">
    <location>
        <position position="163"/>
    </location>
</feature>
<feature type="modified residue" description="Phosphoserine" evidence="4">
    <location>
        <position position="166"/>
    </location>
</feature>